<evidence type="ECO:0000250" key="1">
    <source>
        <dbReference type="UniProtKB" id="Q9CZ16"/>
    </source>
</evidence>
<evidence type="ECO:0000255" key="2"/>
<evidence type="ECO:0000256" key="3">
    <source>
        <dbReference type="SAM" id="MobiDB-lite"/>
    </source>
</evidence>
<evidence type="ECO:0000305" key="4"/>
<keyword id="KW-0256">Endoplasmic reticulum</keyword>
<keyword id="KW-0325">Glycoprotein</keyword>
<keyword id="KW-0472">Membrane</keyword>
<keyword id="KW-1185">Reference proteome</keyword>
<keyword id="KW-0732">Signal</keyword>
<keyword id="KW-0812">Transmembrane</keyword>
<keyword id="KW-1133">Transmembrane helix</keyword>
<comment type="function">
    <text evidence="1">Acts as a negative regulator of osteoclast differentiation in basal and inflammatory conditions by regulating TNFSF11-induced Ca (2+) fluxes, thereby controlling the induction of NFATC1.</text>
</comment>
<comment type="subunit">
    <text evidence="1">Interacts with STIM1.</text>
</comment>
<comment type="subcellular location">
    <subcellularLocation>
        <location evidence="1">Endoplasmic reticulum membrane</location>
        <topology evidence="2">Multi-pass membrane protein</topology>
    </subcellularLocation>
</comment>
<comment type="similarity">
    <text evidence="4">Belongs to the TMEM178 family.</text>
</comment>
<name>T178A_RAT</name>
<reference key="1">
    <citation type="journal article" date="2004" name="Genome Res.">
        <title>The status, quality, and expansion of the NIH full-length cDNA project: the Mammalian Gene Collection (MGC).</title>
        <authorList>
            <consortium name="The MGC Project Team"/>
        </authorList>
    </citation>
    <scope>NUCLEOTIDE SEQUENCE [LARGE SCALE MRNA]</scope>
    <source>
        <tissue>Kidney</tissue>
    </source>
</reference>
<proteinExistence type="evidence at transcript level"/>
<gene>
    <name type="primary">Tmem178a</name>
    <name type="synonym">Tmem178</name>
</gene>
<accession>Q68FV0</accession>
<protein>
    <recommendedName>
        <fullName>Transmembrane protein 178A</fullName>
    </recommendedName>
</protein>
<sequence>MEPRALVTALSLGLSLCSLGLLVTAIFTDHWYETDPRRHKESCERSRAGADPPDQKNRLMPLSHLPLRDSPPLGRRLLPGGPGRSDPESWRSLLGLGGLDAECGRPLFATYSGLWRKCYFLGIDRDIDTLILKGIAQRCTAVKYHFSQPIRLRNIPFNLTKIIQQDEWHLLHLRRITAGFLGMAVAVLLCGCIVATVSFFWEESLTQHVAGLLFLMTGIFCTISLCTYAASVSYDLNRVPKLIYSLPHDVEHGYSWSIFCAWCSLGFIVAAGGLCIAYPFISRTKIAHLKSGRDSTV</sequence>
<organism>
    <name type="scientific">Rattus norvegicus</name>
    <name type="common">Rat</name>
    <dbReference type="NCBI Taxonomy" id="10116"/>
    <lineage>
        <taxon>Eukaryota</taxon>
        <taxon>Metazoa</taxon>
        <taxon>Chordata</taxon>
        <taxon>Craniata</taxon>
        <taxon>Vertebrata</taxon>
        <taxon>Euteleostomi</taxon>
        <taxon>Mammalia</taxon>
        <taxon>Eutheria</taxon>
        <taxon>Euarchontoglires</taxon>
        <taxon>Glires</taxon>
        <taxon>Rodentia</taxon>
        <taxon>Myomorpha</taxon>
        <taxon>Muroidea</taxon>
        <taxon>Muridae</taxon>
        <taxon>Murinae</taxon>
        <taxon>Rattus</taxon>
    </lineage>
</organism>
<dbReference type="EMBL" id="BC079338">
    <property type="protein sequence ID" value="AAH79338.1"/>
    <property type="molecule type" value="mRNA"/>
</dbReference>
<dbReference type="RefSeq" id="NP_001004282.1">
    <property type="nucleotide sequence ID" value="NM_001004282.1"/>
</dbReference>
<dbReference type="FunCoup" id="Q68FV0">
    <property type="interactions" value="685"/>
</dbReference>
<dbReference type="STRING" id="10116.ENSRNOP00000010927"/>
<dbReference type="GlyCosmos" id="Q68FV0">
    <property type="glycosylation" value="1 site, No reported glycans"/>
</dbReference>
<dbReference type="GlyGen" id="Q68FV0">
    <property type="glycosylation" value="1 site"/>
</dbReference>
<dbReference type="PhosphoSitePlus" id="Q68FV0"/>
<dbReference type="PaxDb" id="10116-ENSRNOP00000010927"/>
<dbReference type="Ensembl" id="ENSRNOT00000010927.6">
    <property type="protein sequence ID" value="ENSRNOP00000010927.6"/>
    <property type="gene ID" value="ENSRNOG00000007907.6"/>
</dbReference>
<dbReference type="GeneID" id="362691"/>
<dbReference type="KEGG" id="rno:362691"/>
<dbReference type="UCSC" id="RGD:1303057">
    <property type="organism name" value="rat"/>
</dbReference>
<dbReference type="AGR" id="RGD:1303057"/>
<dbReference type="CTD" id="130733"/>
<dbReference type="RGD" id="1303057">
    <property type="gene designation" value="Tmem178a"/>
</dbReference>
<dbReference type="eggNOG" id="ENOG502R2WV">
    <property type="taxonomic scope" value="Eukaryota"/>
</dbReference>
<dbReference type="InParanoid" id="Q68FV0"/>
<dbReference type="OMA" id="ATYAGLW"/>
<dbReference type="OrthoDB" id="9941453at2759"/>
<dbReference type="PhylomeDB" id="Q68FV0"/>
<dbReference type="TreeFam" id="TF331307"/>
<dbReference type="PRO" id="PR:Q68FV0"/>
<dbReference type="Proteomes" id="UP000002494">
    <property type="component" value="Chromosome 6"/>
</dbReference>
<dbReference type="GO" id="GO:0005789">
    <property type="term" value="C:endoplasmic reticulum membrane"/>
    <property type="evidence" value="ECO:0000250"/>
    <property type="project" value="UniProtKB"/>
</dbReference>
<dbReference type="GO" id="GO:0045671">
    <property type="term" value="P:negative regulation of osteoclast differentiation"/>
    <property type="evidence" value="ECO:0000250"/>
    <property type="project" value="UniProtKB"/>
</dbReference>
<dbReference type="GO" id="GO:0051480">
    <property type="term" value="P:regulation of cytosolic calcium ion concentration"/>
    <property type="evidence" value="ECO:0000250"/>
    <property type="project" value="UniProtKB"/>
</dbReference>
<dbReference type="FunFam" id="1.20.140.150:FF:000024">
    <property type="entry name" value="Transmembrane protein 178A"/>
    <property type="match status" value="1"/>
</dbReference>
<dbReference type="Gene3D" id="1.20.140.150">
    <property type="match status" value="1"/>
</dbReference>
<dbReference type="InterPro" id="IPR004031">
    <property type="entry name" value="PMP22/EMP/MP20/Claudin"/>
</dbReference>
<dbReference type="InterPro" id="IPR039625">
    <property type="entry name" value="T178A/B"/>
</dbReference>
<dbReference type="PANTHER" id="PTHR32005:SF4">
    <property type="entry name" value="TRANSMEMBRANE PROTEIN 178A"/>
    <property type="match status" value="1"/>
</dbReference>
<dbReference type="PANTHER" id="PTHR32005">
    <property type="entry name" value="TRANSMEMBRANE PROTEIN 178B-RELATED"/>
    <property type="match status" value="1"/>
</dbReference>
<dbReference type="Pfam" id="PF13903">
    <property type="entry name" value="Claudin_2"/>
    <property type="match status" value="1"/>
</dbReference>
<feature type="signal peptide" evidence="2">
    <location>
        <begin position="1"/>
        <end position="25"/>
    </location>
</feature>
<feature type="chain" id="PRO_0000287282" description="Transmembrane protein 178A">
    <location>
        <begin position="26"/>
        <end position="297"/>
    </location>
</feature>
<feature type="topological domain" description="Extracellular" evidence="2">
    <location>
        <begin position="26"/>
        <end position="179"/>
    </location>
</feature>
<feature type="transmembrane region" description="Helical" evidence="2">
    <location>
        <begin position="180"/>
        <end position="200"/>
    </location>
</feature>
<feature type="topological domain" description="Cytoplasmic" evidence="2">
    <location>
        <begin position="201"/>
        <end position="208"/>
    </location>
</feature>
<feature type="transmembrane region" description="Helical" evidence="2">
    <location>
        <begin position="209"/>
        <end position="229"/>
    </location>
</feature>
<feature type="topological domain" description="Extracellular" evidence="2">
    <location>
        <begin position="230"/>
        <end position="257"/>
    </location>
</feature>
<feature type="transmembrane region" description="Helical" evidence="2">
    <location>
        <begin position="258"/>
        <end position="278"/>
    </location>
</feature>
<feature type="topological domain" description="Cytoplasmic" evidence="2">
    <location>
        <begin position="279"/>
        <end position="297"/>
    </location>
</feature>
<feature type="region of interest" description="Disordered" evidence="3">
    <location>
        <begin position="41"/>
        <end position="86"/>
    </location>
</feature>
<feature type="compositionally biased region" description="Basic and acidic residues" evidence="3">
    <location>
        <begin position="41"/>
        <end position="57"/>
    </location>
</feature>
<feature type="compositionally biased region" description="Low complexity" evidence="3">
    <location>
        <begin position="68"/>
        <end position="79"/>
    </location>
</feature>
<feature type="glycosylation site" description="N-linked (GlcNAc...) asparagine" evidence="2">
    <location>
        <position position="158"/>
    </location>
</feature>